<accession>Q5RF63</accession>
<organism>
    <name type="scientific">Pongo abelii</name>
    <name type="common">Sumatran orangutan</name>
    <name type="synonym">Pongo pygmaeus abelii</name>
    <dbReference type="NCBI Taxonomy" id="9601"/>
    <lineage>
        <taxon>Eukaryota</taxon>
        <taxon>Metazoa</taxon>
        <taxon>Chordata</taxon>
        <taxon>Craniata</taxon>
        <taxon>Vertebrata</taxon>
        <taxon>Euteleostomi</taxon>
        <taxon>Mammalia</taxon>
        <taxon>Eutheria</taxon>
        <taxon>Euarchontoglires</taxon>
        <taxon>Primates</taxon>
        <taxon>Haplorrhini</taxon>
        <taxon>Catarrhini</taxon>
        <taxon>Hominidae</taxon>
        <taxon>Pongo</taxon>
    </lineage>
</organism>
<evidence type="ECO:0000250" key="1">
    <source>
        <dbReference type="UniProtKB" id="P46063"/>
    </source>
</evidence>
<evidence type="ECO:0000250" key="2">
    <source>
        <dbReference type="UniProtKB" id="Q6AYJ1"/>
    </source>
</evidence>
<evidence type="ECO:0000255" key="3">
    <source>
        <dbReference type="PROSITE-ProRule" id="PRU00541"/>
    </source>
</evidence>
<evidence type="ECO:0000255" key="4">
    <source>
        <dbReference type="PROSITE-ProRule" id="PRU00542"/>
    </source>
</evidence>
<evidence type="ECO:0000256" key="5">
    <source>
        <dbReference type="SAM" id="MobiDB-lite"/>
    </source>
</evidence>
<evidence type="ECO:0000305" key="6"/>
<keyword id="KW-0007">Acetylation</keyword>
<keyword id="KW-0067">ATP-binding</keyword>
<keyword id="KW-0238">DNA-binding</keyword>
<keyword id="KW-0347">Helicase</keyword>
<keyword id="KW-0378">Hydrolase</keyword>
<keyword id="KW-0413">Isomerase</keyword>
<keyword id="KW-0479">Metal-binding</keyword>
<keyword id="KW-0547">Nucleotide-binding</keyword>
<keyword id="KW-0539">Nucleus</keyword>
<keyword id="KW-0597">Phosphoprotein</keyword>
<keyword id="KW-1185">Reference proteome</keyword>
<keyword id="KW-0862">Zinc</keyword>
<comment type="function">
    <text evidence="1">DNA helicase that plays a role in DNA damage repair and genome stability (By similarity). Exhibits a magnesium- and ATP-dependent DNA-helicase activity that unwinds single- and double-stranded DNA in a 3'-5' direction (By similarity). Plays a role in restoring regressed replication forks (By similarity). Required to restart stalled replication forks induced by abortive topoisomerase 1 and 2 lesions (By similarity). May play a role in the repair of DNA that is damaged by ultraviolet light or other mutagens (By similarity).</text>
</comment>
<comment type="catalytic activity">
    <reaction evidence="1">
        <text>Couples ATP hydrolysis with the unwinding of duplex DNA by translocating in the 3'-5' direction.</text>
        <dbReference type="EC" id="5.6.2.4"/>
    </reaction>
</comment>
<comment type="catalytic activity">
    <reaction evidence="1">
        <text>ATP + H2O = ADP + phosphate + H(+)</text>
        <dbReference type="Rhea" id="RHEA:13065"/>
        <dbReference type="ChEBI" id="CHEBI:15377"/>
        <dbReference type="ChEBI" id="CHEBI:15378"/>
        <dbReference type="ChEBI" id="CHEBI:30616"/>
        <dbReference type="ChEBI" id="CHEBI:43474"/>
        <dbReference type="ChEBI" id="CHEBI:456216"/>
    </reaction>
    <physiologicalReaction direction="left-to-right" evidence="1">
        <dbReference type="Rhea" id="RHEA:13066"/>
    </physiologicalReaction>
</comment>
<comment type="catalytic activity">
    <reaction evidence="1">
        <text>dATP + H2O = dADP + phosphate + H(+)</text>
        <dbReference type="Rhea" id="RHEA:51908"/>
        <dbReference type="ChEBI" id="CHEBI:15377"/>
        <dbReference type="ChEBI" id="CHEBI:15378"/>
        <dbReference type="ChEBI" id="CHEBI:43474"/>
        <dbReference type="ChEBI" id="CHEBI:57667"/>
        <dbReference type="ChEBI" id="CHEBI:61404"/>
    </reaction>
    <physiologicalReaction direction="left-to-right" evidence="1">
        <dbReference type="Rhea" id="RHEA:51909"/>
    </physiologicalReaction>
</comment>
<comment type="cofactor">
    <cofactor evidence="1">
        <name>Mg(2+)</name>
        <dbReference type="ChEBI" id="CHEBI:18420"/>
    </cofactor>
    <cofactor evidence="1">
        <name>Mn(2+)</name>
        <dbReference type="ChEBI" id="CHEBI:29035"/>
    </cofactor>
</comment>
<comment type="cofactor">
    <cofactor evidence="1">
        <name>Zn(2+)</name>
        <dbReference type="ChEBI" id="CHEBI:29105"/>
    </cofactor>
    <text evidence="1">Binds 1 Zn(2+) per monomer.</text>
</comment>
<comment type="subunit">
    <text evidence="1">May form homodimers or higher order oligomers (By similarity). Interacts with EXO1. Interacts with MLH1. Interacts with PARP1 (By similarity).</text>
</comment>
<comment type="subcellular location">
    <subcellularLocation>
        <location evidence="1">Nucleus</location>
    </subcellularLocation>
</comment>
<comment type="similarity">
    <text evidence="6">Belongs to the helicase family. RecQ subfamily.</text>
</comment>
<feature type="chain" id="PRO_0000205051" description="ATP-dependent DNA helicase Q1">
    <location>
        <begin position="1"/>
        <end position="649"/>
    </location>
</feature>
<feature type="domain" description="Helicase ATP-binding" evidence="3">
    <location>
        <begin position="100"/>
        <end position="275"/>
    </location>
</feature>
<feature type="domain" description="Helicase C-terminal" evidence="4">
    <location>
        <begin position="300"/>
        <end position="451"/>
    </location>
</feature>
<feature type="region of interest" description="Disordered" evidence="5">
    <location>
        <begin position="597"/>
        <end position="649"/>
    </location>
</feature>
<feature type="short sequence motif" description="DEVH box">
    <location>
        <begin position="219"/>
        <end position="222"/>
    </location>
</feature>
<feature type="compositionally biased region" description="Polar residues" evidence="5">
    <location>
        <begin position="597"/>
        <end position="608"/>
    </location>
</feature>
<feature type="compositionally biased region" description="Basic and acidic residues" evidence="5">
    <location>
        <begin position="609"/>
        <end position="619"/>
    </location>
</feature>
<feature type="compositionally biased region" description="Polar residues" evidence="5">
    <location>
        <begin position="630"/>
        <end position="639"/>
    </location>
</feature>
<feature type="compositionally biased region" description="Basic residues" evidence="5">
    <location>
        <begin position="640"/>
        <end position="649"/>
    </location>
</feature>
<feature type="binding site" evidence="3">
    <location>
        <begin position="113"/>
        <end position="120"/>
    </location>
    <ligand>
        <name>ATP</name>
        <dbReference type="ChEBI" id="CHEBI:30616"/>
    </ligand>
</feature>
<feature type="binding site" evidence="1">
    <location>
        <position position="453"/>
    </location>
    <ligand>
        <name>Zn(2+)</name>
        <dbReference type="ChEBI" id="CHEBI:29105"/>
    </ligand>
</feature>
<feature type="binding site" evidence="1">
    <location>
        <position position="471"/>
    </location>
    <ligand>
        <name>Zn(2+)</name>
        <dbReference type="ChEBI" id="CHEBI:29105"/>
    </ligand>
</feature>
<feature type="binding site" evidence="1">
    <location>
        <position position="475"/>
    </location>
    <ligand>
        <name>Zn(2+)</name>
        <dbReference type="ChEBI" id="CHEBI:29105"/>
    </ligand>
</feature>
<feature type="binding site" evidence="1">
    <location>
        <position position="478"/>
    </location>
    <ligand>
        <name>Zn(2+)</name>
        <dbReference type="ChEBI" id="CHEBI:29105"/>
    </ligand>
</feature>
<feature type="modified residue" description="N6-acetyllysine" evidence="1">
    <location>
        <position position="514"/>
    </location>
</feature>
<feature type="modified residue" description="N6-acetyllysine" evidence="1">
    <location>
        <position position="522"/>
    </location>
</feature>
<feature type="modified residue" description="Phosphoserine" evidence="1">
    <location>
        <position position="597"/>
    </location>
</feature>
<feature type="modified residue" description="Phosphoserine" evidence="2">
    <location>
        <position position="602"/>
    </location>
</feature>
<feature type="modified residue" description="Phosphoserine" evidence="1">
    <location>
        <position position="634"/>
    </location>
</feature>
<reference key="1">
    <citation type="submission" date="2004-11" db="EMBL/GenBank/DDBJ databases">
        <authorList>
            <consortium name="The German cDNA consortium"/>
        </authorList>
    </citation>
    <scope>NUCLEOTIDE SEQUENCE [LARGE SCALE MRNA]</scope>
    <source>
        <tissue>Kidney</tissue>
    </source>
</reference>
<name>RECQ1_PONAB</name>
<dbReference type="EC" id="5.6.2.4" evidence="1"/>
<dbReference type="EMBL" id="CR857298">
    <property type="protein sequence ID" value="CAH89594.1"/>
    <property type="molecule type" value="mRNA"/>
</dbReference>
<dbReference type="RefSeq" id="NP_001124706.1">
    <property type="nucleotide sequence ID" value="NM_001131234.2"/>
</dbReference>
<dbReference type="SMR" id="Q5RF63"/>
<dbReference type="FunCoup" id="Q5RF63">
    <property type="interactions" value="3532"/>
</dbReference>
<dbReference type="STRING" id="9601.ENSPPYP00000004971"/>
<dbReference type="GeneID" id="100171554"/>
<dbReference type="KEGG" id="pon:100171554"/>
<dbReference type="CTD" id="5965"/>
<dbReference type="eggNOG" id="KOG0353">
    <property type="taxonomic scope" value="Eukaryota"/>
</dbReference>
<dbReference type="InParanoid" id="Q5RF63"/>
<dbReference type="OrthoDB" id="10261556at2759"/>
<dbReference type="Proteomes" id="UP000001595">
    <property type="component" value="Unplaced"/>
</dbReference>
<dbReference type="GO" id="GO:0005694">
    <property type="term" value="C:chromosome"/>
    <property type="evidence" value="ECO:0007669"/>
    <property type="project" value="TreeGrafter"/>
</dbReference>
<dbReference type="GO" id="GO:0005737">
    <property type="term" value="C:cytoplasm"/>
    <property type="evidence" value="ECO:0007669"/>
    <property type="project" value="TreeGrafter"/>
</dbReference>
<dbReference type="GO" id="GO:0005634">
    <property type="term" value="C:nucleus"/>
    <property type="evidence" value="ECO:0000250"/>
    <property type="project" value="UniProtKB"/>
</dbReference>
<dbReference type="GO" id="GO:0043138">
    <property type="term" value="F:3'-5' DNA helicase activity"/>
    <property type="evidence" value="ECO:0000250"/>
    <property type="project" value="UniProtKB"/>
</dbReference>
<dbReference type="GO" id="GO:0005524">
    <property type="term" value="F:ATP binding"/>
    <property type="evidence" value="ECO:0007669"/>
    <property type="project" value="UniProtKB-KW"/>
</dbReference>
<dbReference type="GO" id="GO:0016887">
    <property type="term" value="F:ATP hydrolysis activity"/>
    <property type="evidence" value="ECO:0007669"/>
    <property type="project" value="RHEA"/>
</dbReference>
<dbReference type="GO" id="GO:0003677">
    <property type="term" value="F:DNA binding"/>
    <property type="evidence" value="ECO:0007669"/>
    <property type="project" value="UniProtKB-KW"/>
</dbReference>
<dbReference type="GO" id="GO:0036121">
    <property type="term" value="F:double-stranded DNA helicase activity"/>
    <property type="evidence" value="ECO:0000250"/>
    <property type="project" value="UniProtKB"/>
</dbReference>
<dbReference type="GO" id="GO:0009378">
    <property type="term" value="F:four-way junction helicase activity"/>
    <property type="evidence" value="ECO:0007669"/>
    <property type="project" value="TreeGrafter"/>
</dbReference>
<dbReference type="GO" id="GO:0046872">
    <property type="term" value="F:metal ion binding"/>
    <property type="evidence" value="ECO:0007669"/>
    <property type="project" value="UniProtKB-KW"/>
</dbReference>
<dbReference type="GO" id="GO:0000724">
    <property type="term" value="P:double-strand break repair via homologous recombination"/>
    <property type="evidence" value="ECO:0007669"/>
    <property type="project" value="TreeGrafter"/>
</dbReference>
<dbReference type="GO" id="GO:0031297">
    <property type="term" value="P:replication fork processing"/>
    <property type="evidence" value="ECO:0000250"/>
    <property type="project" value="UniProtKB"/>
</dbReference>
<dbReference type="CDD" id="cd18015">
    <property type="entry name" value="DEXHc_RecQ1"/>
    <property type="match status" value="1"/>
</dbReference>
<dbReference type="CDD" id="cd18794">
    <property type="entry name" value="SF2_C_RecQ"/>
    <property type="match status" value="1"/>
</dbReference>
<dbReference type="FunFam" id="1.10.10.10:FF:000306">
    <property type="entry name" value="ATP-dependent DNA helicase"/>
    <property type="match status" value="1"/>
</dbReference>
<dbReference type="FunFam" id="3.40.50.300:FF:000596">
    <property type="entry name" value="ATP-dependent DNA helicase"/>
    <property type="match status" value="1"/>
</dbReference>
<dbReference type="FunFam" id="3.40.50.300:FF:000752">
    <property type="entry name" value="ATP-dependent DNA helicase"/>
    <property type="match status" value="1"/>
</dbReference>
<dbReference type="Gene3D" id="3.40.50.300">
    <property type="entry name" value="P-loop containing nucleotide triphosphate hydrolases"/>
    <property type="match status" value="2"/>
</dbReference>
<dbReference type="Gene3D" id="1.10.10.10">
    <property type="entry name" value="Winged helix-like DNA-binding domain superfamily/Winged helix DNA-binding domain"/>
    <property type="match status" value="1"/>
</dbReference>
<dbReference type="InterPro" id="IPR011545">
    <property type="entry name" value="DEAD/DEAH_box_helicase_dom"/>
</dbReference>
<dbReference type="InterPro" id="IPR004589">
    <property type="entry name" value="DNA_helicase_ATP-dep_RecQ"/>
</dbReference>
<dbReference type="InterPro" id="IPR014001">
    <property type="entry name" value="Helicase_ATP-bd"/>
</dbReference>
<dbReference type="InterPro" id="IPR001650">
    <property type="entry name" value="Helicase_C-like"/>
</dbReference>
<dbReference type="InterPro" id="IPR027417">
    <property type="entry name" value="P-loop_NTPase"/>
</dbReference>
<dbReference type="InterPro" id="IPR032284">
    <property type="entry name" value="RecQ_Zn-bd"/>
</dbReference>
<dbReference type="InterPro" id="IPR036388">
    <property type="entry name" value="WH-like_DNA-bd_sf"/>
</dbReference>
<dbReference type="NCBIfam" id="TIGR00614">
    <property type="entry name" value="recQ_fam"/>
    <property type="match status" value="1"/>
</dbReference>
<dbReference type="PANTHER" id="PTHR13710:SF105">
    <property type="entry name" value="ATP-DEPENDENT DNA HELICASE Q1"/>
    <property type="match status" value="1"/>
</dbReference>
<dbReference type="PANTHER" id="PTHR13710">
    <property type="entry name" value="DNA HELICASE RECQ FAMILY MEMBER"/>
    <property type="match status" value="1"/>
</dbReference>
<dbReference type="Pfam" id="PF00270">
    <property type="entry name" value="DEAD"/>
    <property type="match status" value="1"/>
</dbReference>
<dbReference type="Pfam" id="PF00271">
    <property type="entry name" value="Helicase_C"/>
    <property type="match status" value="1"/>
</dbReference>
<dbReference type="Pfam" id="PF16124">
    <property type="entry name" value="RecQ_Zn_bind"/>
    <property type="match status" value="1"/>
</dbReference>
<dbReference type="SMART" id="SM00487">
    <property type="entry name" value="DEXDc"/>
    <property type="match status" value="1"/>
</dbReference>
<dbReference type="SMART" id="SM00490">
    <property type="entry name" value="HELICc"/>
    <property type="match status" value="1"/>
</dbReference>
<dbReference type="SUPFAM" id="SSF52540">
    <property type="entry name" value="P-loop containing nucleoside triphosphate hydrolases"/>
    <property type="match status" value="2"/>
</dbReference>
<dbReference type="PROSITE" id="PS51192">
    <property type="entry name" value="HELICASE_ATP_BIND_1"/>
    <property type="match status" value="1"/>
</dbReference>
<dbReference type="PROSITE" id="PS51194">
    <property type="entry name" value="HELICASE_CTER"/>
    <property type="match status" value="1"/>
</dbReference>
<protein>
    <recommendedName>
        <fullName evidence="1">ATP-dependent DNA helicase Q1</fullName>
        <ecNumber evidence="1">5.6.2.4</ecNumber>
    </recommendedName>
    <alternativeName>
        <fullName evidence="6">DNA 3'-5' helicase Q1</fullName>
    </alternativeName>
    <alternativeName>
        <fullName>DNA-dependent ATPase Q1</fullName>
    </alternativeName>
    <alternativeName>
        <fullName>RecQ protein-like 1</fullName>
    </alternativeName>
</protein>
<gene>
    <name type="primary">RECQL</name>
    <name type="synonym">RECQL1</name>
</gene>
<proteinExistence type="evidence at transcript level"/>
<sequence length="649" mass="73483">MASVSALTEELDSITSELHAVEIQIQELTERQEELIQKKKVLTKKIKQCLEDSDAGASNEYDSSPAAWNKEDFPWSGKVKDVLQNVFKLQKFRPLQLETINVTMAGKEVFLVMPTGGGKGLCYQLPALCSDGFTLVICPLISLMEDQLMVLKQLGISATMLNASSSKEHVKWVHAEMVNKNSELKLIYVTPEKIAKSKMFMSRLEKAYEARRFTRIAVDEVHCCSQWGHDFRPDYKALGILKRQFPNASLIGLTATATNHVLTDAQKILCIEKCFTFTASFNRPNLYYEVRQKPSNTEDFIEDIVKLINGRYKGQSGIIYCFSQKDSEQVTVSLRNLGIHAGAYHANLEPEDKTTVHRKWSANEIQVVVATVAFGMGIDKPDVRFVIHHSMSKSMENYYQESGRAGRDDMKADCILYYGFGDIFRISSMVVMENVGQQKLYEMVSYCQNISKCRRLLMAQHFDEVWNSEACNKMCDNCCKDSAFERKNITEYCRDLIKILKQAEELNEKLTPLKLIDSWMGKGAAKLRVAGVVAPTLPREDLEKIIAHFLIQQYLKEDYSFTAYATISYLKIGPKANLLNNEAHAITMQVTKSTQNSFRVESSQTCHSEQGDKKMEEKNSGNFQKKAANMLQQSGSKNTGAKKRKIDDA</sequence>